<comment type="function">
    <text>Seed storage protein. It accounts for about 15% of the total endosperm protein content.</text>
</comment>
<comment type="subcellular location">
    <subcellularLocation>
        <location>Vacuole</location>
        <location>Aleurone grain membrane</location>
    </subcellularLocation>
    <text>Border of the inner part of the membrane of endosperm protein bodies.</text>
</comment>
<comment type="similarity">
    <text evidence="3">Belongs to the gliadin/glutenin family.</text>
</comment>
<feature type="signal peptide" evidence="2">
    <location>
        <begin position="1"/>
        <end position="19"/>
    </location>
</feature>
<feature type="chain" id="PRO_0000032214" description="Glutelin-2">
    <location>
        <begin position="20"/>
        <end position="223"/>
    </location>
</feature>
<feature type="repeat" description="1-1">
    <location>
        <begin position="31"/>
        <end position="36"/>
    </location>
</feature>
<feature type="repeat" description="1-2">
    <location>
        <begin position="37"/>
        <end position="42"/>
    </location>
</feature>
<feature type="repeat" description="1-3">
    <location>
        <begin position="43"/>
        <end position="48"/>
    </location>
</feature>
<feature type="repeat" description="1-4">
    <location>
        <begin position="49"/>
        <end position="54"/>
    </location>
</feature>
<feature type="repeat" description="1-5">
    <location>
        <begin position="55"/>
        <end position="60"/>
    </location>
</feature>
<feature type="repeat" description="1-6">
    <location>
        <begin position="61"/>
        <end position="66"/>
    </location>
</feature>
<feature type="repeat" description="1-7">
    <location>
        <begin position="67"/>
        <end position="72"/>
    </location>
</feature>
<feature type="repeat" description="1-8">
    <location>
        <begin position="73"/>
        <end position="78"/>
    </location>
</feature>
<feature type="repeat" description="2-1">
    <location>
        <begin position="97"/>
        <end position="104"/>
    </location>
</feature>
<feature type="repeat" description="2-2">
    <location>
        <begin position="105"/>
        <end position="112"/>
    </location>
</feature>
<feature type="region of interest" description="8 X 6 AA tandem repeats of P-P-P-V-H-L">
    <location>
        <begin position="31"/>
        <end position="78"/>
    </location>
</feature>
<feature type="region of interest" description="2 X 8 AA tandem repeats of Q-P-H-P-C-P-C-Q">
    <location>
        <begin position="97"/>
        <end position="112"/>
    </location>
</feature>
<feature type="sequence variant" description="In 66% of the molecules." evidence="1">
    <original>C</original>
    <variation>S</variation>
    <location>
        <position position="28"/>
    </location>
</feature>
<evidence type="ECO:0000269" key="1">
    <source>
    </source>
</evidence>
<evidence type="ECO:0000269" key="2">
    <source ref="6"/>
</evidence>
<evidence type="ECO:0000305" key="3"/>
<proteinExistence type="evidence at protein level"/>
<accession>P04706</accession>
<accession>P02860</accession>
<accession>P08415</accession>
<organism>
    <name type="scientific">Zea mays</name>
    <name type="common">Maize</name>
    <dbReference type="NCBI Taxonomy" id="4577"/>
    <lineage>
        <taxon>Eukaryota</taxon>
        <taxon>Viridiplantae</taxon>
        <taxon>Streptophyta</taxon>
        <taxon>Embryophyta</taxon>
        <taxon>Tracheophyta</taxon>
        <taxon>Spermatophyta</taxon>
        <taxon>Magnoliopsida</taxon>
        <taxon>Liliopsida</taxon>
        <taxon>Poales</taxon>
        <taxon>Poaceae</taxon>
        <taxon>PACMAD clade</taxon>
        <taxon>Panicoideae</taxon>
        <taxon>Andropogonodae</taxon>
        <taxon>Andropogoneae</taxon>
        <taxon>Tripsacinae</taxon>
        <taxon>Zea</taxon>
    </lineage>
</organism>
<keyword id="KW-0903">Direct protein sequencing</keyword>
<keyword id="KW-0472">Membrane</keyword>
<keyword id="KW-1185">Reference proteome</keyword>
<keyword id="KW-0677">Repeat</keyword>
<keyword id="KW-0708">Seed storage protein</keyword>
<keyword id="KW-0732">Signal</keyword>
<keyword id="KW-0758">Storage protein</keyword>
<keyword id="KW-0926">Vacuole</keyword>
<sequence>MRVLLVALALLALAASATSTHTSGGCGCQPPPPVHLPPPVHLPPPVHLPPPVHLPPPVHLPPPVHLPPPVHVPPPVHLPPPPCHYPTQPPRPQPHPQPHPCPCQQPHPSPCQLQGTCGVGSTPILGQCVEFLRHQCSPTATPYCSPQCQSLRQQCCQQLRQVEPQHRYQAIFGLVLQSILQQQPQSGQVAGLLAAQIAQQLTAMCGLQQPTPCPYAAAGGVPH</sequence>
<dbReference type="EMBL" id="X02230">
    <property type="protein sequence ID" value="CAA26149.1"/>
    <property type="molecule type" value="mRNA"/>
</dbReference>
<dbReference type="EMBL" id="M16066">
    <property type="protein sequence ID" value="AAA33468.1"/>
    <property type="molecule type" value="Genomic_DNA"/>
</dbReference>
<dbReference type="EMBL" id="M16218">
    <property type="protein sequence ID" value="AAA33537.1"/>
    <property type="molecule type" value="mRNA"/>
</dbReference>
<dbReference type="EMBL" id="X53514">
    <property type="protein sequence ID" value="CAA37594.1"/>
    <property type="molecule type" value="Genomic_DNA"/>
</dbReference>
<dbReference type="EMBL" id="S78780">
    <property type="protein sequence ID" value="AAP32017.1"/>
    <property type="molecule type" value="mRNA"/>
</dbReference>
<dbReference type="PIR" id="A03351">
    <property type="entry name" value="ZMZM5"/>
</dbReference>
<dbReference type="PIR" id="A93557">
    <property type="entry name" value="ZMZM19"/>
</dbReference>
<dbReference type="RefSeq" id="NP_001105354.1">
    <property type="nucleotide sequence ID" value="NM_001111884.1"/>
</dbReference>
<dbReference type="RefSeq" id="NP_001337252.1">
    <property type="nucleotide sequence ID" value="NM_001350323.1"/>
</dbReference>
<dbReference type="FunCoup" id="P04706">
    <property type="interactions" value="3"/>
</dbReference>
<dbReference type="STRING" id="4577.P04706"/>
<dbReference type="Allergome" id="2780">
    <property type="allergen name" value="Zea m 27kD Zein"/>
</dbReference>
<dbReference type="PaxDb" id="4577-GRMZM2G138727_P01"/>
<dbReference type="EnsemblPlants" id="Zm00001eb313800_T001">
    <property type="protein sequence ID" value="Zm00001eb313800_P001"/>
    <property type="gene ID" value="Zm00001eb313800"/>
</dbReference>
<dbReference type="GeneID" id="542296"/>
<dbReference type="Gramene" id="Zm00001eb313800_T001">
    <property type="protein sequence ID" value="Zm00001eb313800_P001"/>
    <property type="gene ID" value="Zm00001eb313800"/>
</dbReference>
<dbReference type="MaizeGDB" id="58111"/>
<dbReference type="eggNOG" id="ENOG502R4K8">
    <property type="taxonomic scope" value="Eukaryota"/>
</dbReference>
<dbReference type="HOGENOM" id="CLU_1477240_0_0_1"/>
<dbReference type="InParanoid" id="P04706"/>
<dbReference type="OMA" id="NDCCCGC"/>
<dbReference type="Proteomes" id="UP000007305">
    <property type="component" value="Chromosome 7"/>
</dbReference>
<dbReference type="ExpressionAtlas" id="P04706">
    <property type="expression patterns" value="baseline and differential"/>
</dbReference>
<dbReference type="GO" id="GO:0032578">
    <property type="term" value="C:aleurone grain membrane"/>
    <property type="evidence" value="ECO:0007669"/>
    <property type="project" value="UniProtKB-SubCell"/>
</dbReference>
<dbReference type="GO" id="GO:0005773">
    <property type="term" value="C:vacuole"/>
    <property type="evidence" value="ECO:0007669"/>
    <property type="project" value="UniProtKB-KW"/>
</dbReference>
<dbReference type="GO" id="GO:0045735">
    <property type="term" value="F:nutrient reservoir activity"/>
    <property type="evidence" value="ECO:0007669"/>
    <property type="project" value="UniProtKB-KW"/>
</dbReference>
<dbReference type="Gene3D" id="1.10.110.10">
    <property type="entry name" value="Plant lipid-transfer and hydrophobic proteins"/>
    <property type="match status" value="1"/>
</dbReference>
<dbReference type="InterPro" id="IPR036312">
    <property type="entry name" value="Bifun_inhib/LTP/seed_sf"/>
</dbReference>
<dbReference type="InterPro" id="IPR016140">
    <property type="entry name" value="Bifunc_inhib/LTP/seed_store"/>
</dbReference>
<dbReference type="InterPro" id="IPR001954">
    <property type="entry name" value="Glia_glutenin"/>
</dbReference>
<dbReference type="InterPro" id="IPR000480">
    <property type="entry name" value="Glutelin"/>
</dbReference>
<dbReference type="PANTHER" id="PTHR33454:SF17">
    <property type="entry name" value="GLUTELIN-2"/>
    <property type="match status" value="1"/>
</dbReference>
<dbReference type="PANTHER" id="PTHR33454">
    <property type="entry name" value="PROLAMIN PPROL 14P"/>
    <property type="match status" value="1"/>
</dbReference>
<dbReference type="Pfam" id="PF13016">
    <property type="entry name" value="Gliadin"/>
    <property type="match status" value="1"/>
</dbReference>
<dbReference type="PRINTS" id="PR00211">
    <property type="entry name" value="GLUTELIN"/>
</dbReference>
<dbReference type="SMART" id="SM00499">
    <property type="entry name" value="AAI"/>
    <property type="match status" value="1"/>
</dbReference>
<dbReference type="SUPFAM" id="SSF47699">
    <property type="entry name" value="Bifunctional inhibitor/lipid-transfer protein/seed storage 2S albumin"/>
    <property type="match status" value="1"/>
</dbReference>
<protein>
    <recommendedName>
        <fullName>Glutelin-2</fullName>
    </recommendedName>
    <alternativeName>
        <fullName>27 kDa zein</fullName>
    </alternativeName>
    <alternativeName>
        <fullName>Alcohol-soluble reduced glutelin</fullName>
        <shortName>ASG</shortName>
    </alternativeName>
    <alternativeName>
        <fullName>Zein Zc2</fullName>
    </alternativeName>
    <alternativeName>
        <fullName>Zein-gamma</fullName>
    </alternativeName>
</protein>
<reference key="1">
    <citation type="journal article" date="1987" name="Gene">
        <title>Multiple variability in the sequence of a family of maize endosperm proteins.</title>
        <authorList>
            <person name="Prat S."/>
            <person name="Perez-Grau L."/>
            <person name="Puigdomenech P."/>
        </authorList>
    </citation>
    <scope>NUCLEOTIDE SEQUENCE</scope>
    <source>
        <strain>cv. W64 X W64O2</strain>
    </source>
</reference>
<reference key="2">
    <citation type="journal article" date="1985" name="Nucleic Acids Res.">
        <title>Nucleic acid (cDNA) and amino acid sequences of the maize endosperm protein glutelin-2.</title>
        <authorList>
            <person name="Prat S."/>
            <person name="Cortadas J."/>
            <person name="Puigdomenech P."/>
            <person name="Palau J."/>
        </authorList>
    </citation>
    <scope>NUCLEOTIDE SEQUENCE [MRNA]</scope>
    <source>
        <strain>cv. inbred line E-10</strain>
    </source>
</reference>
<reference key="3">
    <citation type="journal article" date="1986" name="Plant Sci.">
        <title>Isolation and sequencing of a 28 kd glutelin-2 gene from maize: common elements in the 5' flanking regions among zein and glutelin genes.</title>
        <authorList>
            <person name="Boronat A."/>
            <person name="Martinez M.C."/>
            <person name="Reina M."/>
            <person name="Puigdomenech P."/>
            <person name="Palau J."/>
        </authorList>
    </citation>
    <scope>NUCLEOTIDE SEQUENCE</scope>
</reference>
<reference key="4">
    <citation type="journal article" date="1990" name="Nucleic Acids Res.">
        <title>Sequence analysis of a genomic clone encoding a Zc2 protein from Zea mays W64 A.</title>
        <authorList>
            <person name="Reina M."/>
            <person name="Ponte I."/>
            <person name="Guillen P."/>
            <person name="Boronat A."/>
            <person name="Palau J."/>
        </authorList>
    </citation>
    <scope>NUCLEOTIDE SEQUENCE [GENOMIC DNA]</scope>
    <source>
        <strain>cv. Wisconsin 64A</strain>
        <tissue>Endosperm</tissue>
    </source>
</reference>
<reference key="5">
    <citation type="journal article" date="1986" name="Plant Physiol.">
        <title>Primary structure of a proline-rich zein and its cDNA.</title>
        <authorList>
            <person name="Wang S.-Z."/>
            <person name="Esen A."/>
        </authorList>
    </citation>
    <scope>NUCLEOTIDE SEQUENCE OF 15-223</scope>
    <scope>VARIANT SER-28</scope>
</reference>
<reference key="6">
    <citation type="journal article" date="1982" name="Nature">
        <title>Tandem repeats in the N-terminal sequence of a proline-rich protein from corn endosperm.</title>
        <authorList>
            <person name="Esen A."/>
            <person name="Bietz J.A."/>
            <person name="Paulis J.W."/>
            <person name="Wall J.S."/>
        </authorList>
    </citation>
    <scope>PROTEIN SEQUENCE OF 20-77</scope>
</reference>
<name>GLU2_MAIZE</name>